<protein>
    <recommendedName>
        <fullName evidence="1">Adenylosuccinate synthetase</fullName>
        <shortName evidence="1">AMPSase</shortName>
        <shortName evidence="1">AdSS</shortName>
        <ecNumber evidence="1">6.3.4.4</ecNumber>
    </recommendedName>
    <alternativeName>
        <fullName evidence="1">IMP--aspartate ligase</fullName>
    </alternativeName>
</protein>
<dbReference type="EC" id="6.3.4.4" evidence="1"/>
<dbReference type="EMBL" id="AE004439">
    <property type="protein sequence ID" value="AAK03022.1"/>
    <property type="molecule type" value="Genomic_DNA"/>
</dbReference>
<dbReference type="RefSeq" id="WP_010906931.1">
    <property type="nucleotide sequence ID" value="NC_002663.1"/>
</dbReference>
<dbReference type="SMR" id="P57889"/>
<dbReference type="STRING" id="272843.PM0938"/>
<dbReference type="EnsemblBacteria" id="AAK03022">
    <property type="protein sequence ID" value="AAK03022"/>
    <property type="gene ID" value="PM0938"/>
</dbReference>
<dbReference type="KEGG" id="pmu:PM0938"/>
<dbReference type="PATRIC" id="fig|272843.6.peg.949"/>
<dbReference type="HOGENOM" id="CLU_029848_0_0_6"/>
<dbReference type="OrthoDB" id="9807553at2"/>
<dbReference type="UniPathway" id="UPA00075">
    <property type="reaction ID" value="UER00335"/>
</dbReference>
<dbReference type="Proteomes" id="UP000000809">
    <property type="component" value="Chromosome"/>
</dbReference>
<dbReference type="GO" id="GO:0005737">
    <property type="term" value="C:cytoplasm"/>
    <property type="evidence" value="ECO:0007669"/>
    <property type="project" value="UniProtKB-SubCell"/>
</dbReference>
<dbReference type="GO" id="GO:0004019">
    <property type="term" value="F:adenylosuccinate synthase activity"/>
    <property type="evidence" value="ECO:0007669"/>
    <property type="project" value="UniProtKB-UniRule"/>
</dbReference>
<dbReference type="GO" id="GO:0005525">
    <property type="term" value="F:GTP binding"/>
    <property type="evidence" value="ECO:0007669"/>
    <property type="project" value="UniProtKB-UniRule"/>
</dbReference>
<dbReference type="GO" id="GO:0000287">
    <property type="term" value="F:magnesium ion binding"/>
    <property type="evidence" value="ECO:0007669"/>
    <property type="project" value="UniProtKB-UniRule"/>
</dbReference>
<dbReference type="GO" id="GO:0044208">
    <property type="term" value="P:'de novo' AMP biosynthetic process"/>
    <property type="evidence" value="ECO:0007669"/>
    <property type="project" value="UniProtKB-UniRule"/>
</dbReference>
<dbReference type="GO" id="GO:0046040">
    <property type="term" value="P:IMP metabolic process"/>
    <property type="evidence" value="ECO:0007669"/>
    <property type="project" value="TreeGrafter"/>
</dbReference>
<dbReference type="CDD" id="cd03108">
    <property type="entry name" value="AdSS"/>
    <property type="match status" value="1"/>
</dbReference>
<dbReference type="FunFam" id="1.10.300.10:FF:000001">
    <property type="entry name" value="Adenylosuccinate synthetase"/>
    <property type="match status" value="1"/>
</dbReference>
<dbReference type="FunFam" id="3.90.170.10:FF:000001">
    <property type="entry name" value="Adenylosuccinate synthetase"/>
    <property type="match status" value="1"/>
</dbReference>
<dbReference type="Gene3D" id="3.40.440.10">
    <property type="entry name" value="Adenylosuccinate Synthetase, subunit A, domain 1"/>
    <property type="match status" value="1"/>
</dbReference>
<dbReference type="Gene3D" id="1.10.300.10">
    <property type="entry name" value="Adenylosuccinate Synthetase, subunit A, domain 2"/>
    <property type="match status" value="1"/>
</dbReference>
<dbReference type="Gene3D" id="3.90.170.10">
    <property type="entry name" value="Adenylosuccinate Synthetase, subunit A, domain 3"/>
    <property type="match status" value="1"/>
</dbReference>
<dbReference type="HAMAP" id="MF_00011">
    <property type="entry name" value="Adenylosucc_synth"/>
    <property type="match status" value="1"/>
</dbReference>
<dbReference type="InterPro" id="IPR018220">
    <property type="entry name" value="Adenylosuccin_syn_GTP-bd"/>
</dbReference>
<dbReference type="InterPro" id="IPR033128">
    <property type="entry name" value="Adenylosuccin_syn_Lys_AS"/>
</dbReference>
<dbReference type="InterPro" id="IPR042109">
    <property type="entry name" value="Adenylosuccinate_synth_dom1"/>
</dbReference>
<dbReference type="InterPro" id="IPR042110">
    <property type="entry name" value="Adenylosuccinate_synth_dom2"/>
</dbReference>
<dbReference type="InterPro" id="IPR042111">
    <property type="entry name" value="Adenylosuccinate_synth_dom3"/>
</dbReference>
<dbReference type="InterPro" id="IPR001114">
    <property type="entry name" value="Adenylosuccinate_synthetase"/>
</dbReference>
<dbReference type="InterPro" id="IPR027417">
    <property type="entry name" value="P-loop_NTPase"/>
</dbReference>
<dbReference type="NCBIfam" id="NF002223">
    <property type="entry name" value="PRK01117.1"/>
    <property type="match status" value="1"/>
</dbReference>
<dbReference type="NCBIfam" id="TIGR00184">
    <property type="entry name" value="purA"/>
    <property type="match status" value="1"/>
</dbReference>
<dbReference type="PANTHER" id="PTHR11846">
    <property type="entry name" value="ADENYLOSUCCINATE SYNTHETASE"/>
    <property type="match status" value="1"/>
</dbReference>
<dbReference type="PANTHER" id="PTHR11846:SF0">
    <property type="entry name" value="ADENYLOSUCCINATE SYNTHETASE"/>
    <property type="match status" value="1"/>
</dbReference>
<dbReference type="Pfam" id="PF00709">
    <property type="entry name" value="Adenylsucc_synt"/>
    <property type="match status" value="1"/>
</dbReference>
<dbReference type="SMART" id="SM00788">
    <property type="entry name" value="Adenylsucc_synt"/>
    <property type="match status" value="1"/>
</dbReference>
<dbReference type="SUPFAM" id="SSF52540">
    <property type="entry name" value="P-loop containing nucleoside triphosphate hydrolases"/>
    <property type="match status" value="1"/>
</dbReference>
<dbReference type="PROSITE" id="PS01266">
    <property type="entry name" value="ADENYLOSUCCIN_SYN_1"/>
    <property type="match status" value="1"/>
</dbReference>
<dbReference type="PROSITE" id="PS00513">
    <property type="entry name" value="ADENYLOSUCCIN_SYN_2"/>
    <property type="match status" value="1"/>
</dbReference>
<sequence>MGKSVVILGAQWGDEGKGKIVDLLTDRVKYVVRYQGGHNAGHTLIINGEKTVLRLIPSGILRENVTCLIGNGVVLSPAALMQEMGELESRGINVRERLLISEACPLILPYHVAMDHAREAALGKNKIGTTGRGIGPAYEDKVARRGLRVGDLFNREAFAEKLKTILDYYNFQLVNYYKAEAVDFQKTLDDVMAVADIITGMVADVTTMLDKARKNGDNILFEGAQGTMLDIDHGTYPFVTSSNTTAGGVATGAGFGPRNLDYVLGIIKAYCTRVGGGPFTTELFDEVGSEIARKGNEFGAVTGRPRRCGWFDAVAIRRAIQLNSISGFCMTKLDVLDGFDEVKICVAYKMPNGDILDYAPLAAKDWEGVEPIYETMPGWKENTFGVTDVNQLPEACRNYVKRIEEVTGVPVDILSTGPDRVETMILRDPFAA</sequence>
<evidence type="ECO:0000255" key="1">
    <source>
        <dbReference type="HAMAP-Rule" id="MF_00011"/>
    </source>
</evidence>
<accession>P57889</accession>
<name>PURA_PASMU</name>
<gene>
    <name evidence="1" type="primary">purA</name>
    <name type="ordered locus">PM0938</name>
</gene>
<organism>
    <name type="scientific">Pasteurella multocida (strain Pm70)</name>
    <dbReference type="NCBI Taxonomy" id="272843"/>
    <lineage>
        <taxon>Bacteria</taxon>
        <taxon>Pseudomonadati</taxon>
        <taxon>Pseudomonadota</taxon>
        <taxon>Gammaproteobacteria</taxon>
        <taxon>Pasteurellales</taxon>
        <taxon>Pasteurellaceae</taxon>
        <taxon>Pasteurella</taxon>
    </lineage>
</organism>
<reference key="1">
    <citation type="journal article" date="2001" name="Proc. Natl. Acad. Sci. U.S.A.">
        <title>Complete genomic sequence of Pasteurella multocida Pm70.</title>
        <authorList>
            <person name="May B.J."/>
            <person name="Zhang Q."/>
            <person name="Li L.L."/>
            <person name="Paustian M.L."/>
            <person name="Whittam T.S."/>
            <person name="Kapur V."/>
        </authorList>
    </citation>
    <scope>NUCLEOTIDE SEQUENCE [LARGE SCALE GENOMIC DNA]</scope>
    <source>
        <strain>Pm70</strain>
    </source>
</reference>
<keyword id="KW-0963">Cytoplasm</keyword>
<keyword id="KW-0342">GTP-binding</keyword>
<keyword id="KW-0436">Ligase</keyword>
<keyword id="KW-0460">Magnesium</keyword>
<keyword id="KW-0479">Metal-binding</keyword>
<keyword id="KW-0547">Nucleotide-binding</keyword>
<keyword id="KW-0658">Purine biosynthesis</keyword>
<keyword id="KW-1185">Reference proteome</keyword>
<comment type="function">
    <text evidence="1">Plays an important role in the de novo pathway of purine nucleotide biosynthesis. Catalyzes the first committed step in the biosynthesis of AMP from IMP.</text>
</comment>
<comment type="catalytic activity">
    <reaction evidence="1">
        <text>IMP + L-aspartate + GTP = N(6)-(1,2-dicarboxyethyl)-AMP + GDP + phosphate + 2 H(+)</text>
        <dbReference type="Rhea" id="RHEA:15753"/>
        <dbReference type="ChEBI" id="CHEBI:15378"/>
        <dbReference type="ChEBI" id="CHEBI:29991"/>
        <dbReference type="ChEBI" id="CHEBI:37565"/>
        <dbReference type="ChEBI" id="CHEBI:43474"/>
        <dbReference type="ChEBI" id="CHEBI:57567"/>
        <dbReference type="ChEBI" id="CHEBI:58053"/>
        <dbReference type="ChEBI" id="CHEBI:58189"/>
        <dbReference type="EC" id="6.3.4.4"/>
    </reaction>
</comment>
<comment type="cofactor">
    <cofactor evidence="1">
        <name>Mg(2+)</name>
        <dbReference type="ChEBI" id="CHEBI:18420"/>
    </cofactor>
    <text evidence="1">Binds 1 Mg(2+) ion per subunit.</text>
</comment>
<comment type="pathway">
    <text evidence="1">Purine metabolism; AMP biosynthesis via de novo pathway; AMP from IMP: step 1/2.</text>
</comment>
<comment type="subunit">
    <text evidence="1">Homodimer.</text>
</comment>
<comment type="subcellular location">
    <subcellularLocation>
        <location evidence="1">Cytoplasm</location>
    </subcellularLocation>
</comment>
<comment type="similarity">
    <text evidence="1">Belongs to the adenylosuccinate synthetase family.</text>
</comment>
<proteinExistence type="inferred from homology"/>
<feature type="chain" id="PRO_0000095206" description="Adenylosuccinate synthetase">
    <location>
        <begin position="1"/>
        <end position="432"/>
    </location>
</feature>
<feature type="active site" description="Proton acceptor" evidence="1">
    <location>
        <position position="14"/>
    </location>
</feature>
<feature type="active site" description="Proton donor" evidence="1">
    <location>
        <position position="42"/>
    </location>
</feature>
<feature type="binding site" evidence="1">
    <location>
        <begin position="13"/>
        <end position="19"/>
    </location>
    <ligand>
        <name>GTP</name>
        <dbReference type="ChEBI" id="CHEBI:37565"/>
    </ligand>
</feature>
<feature type="binding site" description="in other chain" evidence="1">
    <location>
        <begin position="14"/>
        <end position="17"/>
    </location>
    <ligand>
        <name>IMP</name>
        <dbReference type="ChEBI" id="CHEBI:58053"/>
        <note>ligand shared between dimeric partners</note>
    </ligand>
</feature>
<feature type="binding site" evidence="1">
    <location>
        <position position="14"/>
    </location>
    <ligand>
        <name>Mg(2+)</name>
        <dbReference type="ChEBI" id="CHEBI:18420"/>
    </ligand>
</feature>
<feature type="binding site" description="in other chain" evidence="1">
    <location>
        <begin position="39"/>
        <end position="42"/>
    </location>
    <ligand>
        <name>IMP</name>
        <dbReference type="ChEBI" id="CHEBI:58053"/>
        <note>ligand shared between dimeric partners</note>
    </ligand>
</feature>
<feature type="binding site" evidence="1">
    <location>
        <begin position="41"/>
        <end position="43"/>
    </location>
    <ligand>
        <name>GTP</name>
        <dbReference type="ChEBI" id="CHEBI:37565"/>
    </ligand>
</feature>
<feature type="binding site" evidence="1">
    <location>
        <position position="41"/>
    </location>
    <ligand>
        <name>Mg(2+)</name>
        <dbReference type="ChEBI" id="CHEBI:18420"/>
    </ligand>
</feature>
<feature type="binding site" description="in other chain" evidence="1">
    <location>
        <position position="130"/>
    </location>
    <ligand>
        <name>IMP</name>
        <dbReference type="ChEBI" id="CHEBI:58053"/>
        <note>ligand shared between dimeric partners</note>
    </ligand>
</feature>
<feature type="binding site" evidence="1">
    <location>
        <position position="144"/>
    </location>
    <ligand>
        <name>IMP</name>
        <dbReference type="ChEBI" id="CHEBI:58053"/>
        <note>ligand shared between dimeric partners</note>
    </ligand>
</feature>
<feature type="binding site" description="in other chain" evidence="1">
    <location>
        <position position="225"/>
    </location>
    <ligand>
        <name>IMP</name>
        <dbReference type="ChEBI" id="CHEBI:58053"/>
        <note>ligand shared between dimeric partners</note>
    </ligand>
</feature>
<feature type="binding site" description="in other chain" evidence="1">
    <location>
        <position position="240"/>
    </location>
    <ligand>
        <name>IMP</name>
        <dbReference type="ChEBI" id="CHEBI:58053"/>
        <note>ligand shared between dimeric partners</note>
    </ligand>
</feature>
<feature type="binding site" evidence="1">
    <location>
        <begin position="300"/>
        <end position="306"/>
    </location>
    <ligand>
        <name>substrate</name>
    </ligand>
</feature>
<feature type="binding site" description="in other chain" evidence="1">
    <location>
        <position position="304"/>
    </location>
    <ligand>
        <name>IMP</name>
        <dbReference type="ChEBI" id="CHEBI:58053"/>
        <note>ligand shared between dimeric partners</note>
    </ligand>
</feature>
<feature type="binding site" evidence="1">
    <location>
        <position position="306"/>
    </location>
    <ligand>
        <name>GTP</name>
        <dbReference type="ChEBI" id="CHEBI:37565"/>
    </ligand>
</feature>
<feature type="binding site" evidence="1">
    <location>
        <begin position="332"/>
        <end position="334"/>
    </location>
    <ligand>
        <name>GTP</name>
        <dbReference type="ChEBI" id="CHEBI:37565"/>
    </ligand>
</feature>
<feature type="binding site" evidence="1">
    <location>
        <begin position="415"/>
        <end position="417"/>
    </location>
    <ligand>
        <name>GTP</name>
        <dbReference type="ChEBI" id="CHEBI:37565"/>
    </ligand>
</feature>